<proteinExistence type="inferred from homology"/>
<accession>O30548</accession>
<keyword id="KW-0028">Amino-acid biosynthesis</keyword>
<keyword id="KW-0963">Cytoplasm</keyword>
<keyword id="KW-0368">Histidine biosynthesis</keyword>
<dbReference type="EMBL" id="AF010189">
    <property type="protein sequence ID" value="AAC46133.1"/>
    <property type="molecule type" value="Genomic_DNA"/>
</dbReference>
<dbReference type="SMR" id="O30548"/>
<dbReference type="eggNOG" id="COG3705">
    <property type="taxonomic scope" value="Bacteria"/>
</dbReference>
<dbReference type="UniPathway" id="UPA00031">
    <property type="reaction ID" value="UER00006"/>
</dbReference>
<dbReference type="GO" id="GO:0005737">
    <property type="term" value="C:cytoplasm"/>
    <property type="evidence" value="ECO:0007669"/>
    <property type="project" value="UniProtKB-SubCell"/>
</dbReference>
<dbReference type="GO" id="GO:0000105">
    <property type="term" value="P:L-histidine biosynthetic process"/>
    <property type="evidence" value="ECO:0007669"/>
    <property type="project" value="UniProtKB-UniRule"/>
</dbReference>
<dbReference type="CDD" id="cd00773">
    <property type="entry name" value="HisRS-like_core"/>
    <property type="match status" value="1"/>
</dbReference>
<dbReference type="Gene3D" id="3.30.930.10">
    <property type="entry name" value="Bira Bifunctional Protein, Domain 2"/>
    <property type="match status" value="1"/>
</dbReference>
<dbReference type="HAMAP" id="MF_00125">
    <property type="entry name" value="HisZ"/>
    <property type="match status" value="1"/>
</dbReference>
<dbReference type="InterPro" id="IPR045864">
    <property type="entry name" value="aa-tRNA-synth_II/BPL/LPL"/>
</dbReference>
<dbReference type="InterPro" id="IPR041715">
    <property type="entry name" value="HisRS-like_core"/>
</dbReference>
<dbReference type="InterPro" id="IPR004516">
    <property type="entry name" value="HisRS/HisZ"/>
</dbReference>
<dbReference type="InterPro" id="IPR004517">
    <property type="entry name" value="HisZ"/>
</dbReference>
<dbReference type="NCBIfam" id="TIGR00443">
    <property type="entry name" value="hisZ_biosyn_reg"/>
    <property type="match status" value="1"/>
</dbReference>
<dbReference type="NCBIfam" id="NF008935">
    <property type="entry name" value="PRK12292.1-1"/>
    <property type="match status" value="1"/>
</dbReference>
<dbReference type="NCBIfam" id="NF008937">
    <property type="entry name" value="PRK12292.1-4"/>
    <property type="match status" value="1"/>
</dbReference>
<dbReference type="NCBIfam" id="NF009086">
    <property type="entry name" value="PRK12421.1"/>
    <property type="match status" value="1"/>
</dbReference>
<dbReference type="PANTHER" id="PTHR11476:SF7">
    <property type="entry name" value="HISTIDINE--TRNA LIGASE"/>
    <property type="match status" value="1"/>
</dbReference>
<dbReference type="PANTHER" id="PTHR11476">
    <property type="entry name" value="HISTIDYL-TRNA SYNTHETASE"/>
    <property type="match status" value="1"/>
</dbReference>
<dbReference type="Pfam" id="PF13393">
    <property type="entry name" value="tRNA-synt_His"/>
    <property type="match status" value="1"/>
</dbReference>
<dbReference type="PIRSF" id="PIRSF001549">
    <property type="entry name" value="His-tRNA_synth"/>
    <property type="match status" value="1"/>
</dbReference>
<dbReference type="SUPFAM" id="SSF55681">
    <property type="entry name" value="Class II aaRS and biotin synthetases"/>
    <property type="match status" value="1"/>
</dbReference>
<reference key="1">
    <citation type="journal article" date="1998" name="Microbiology">
        <title>Natural genetic transformation of Pseudomonas stutzeri in a non-sterile soil.</title>
        <authorList>
            <person name="Sikorski J."/>
            <person name="Graupner S."/>
            <person name="Lorenz M.G."/>
            <person name="Wackernagel W."/>
        </authorList>
    </citation>
    <scope>NUCLEOTIDE SEQUENCE [GENOMIC DNA]</scope>
    <source>
        <strain>DSM 10701 / IAM 15110 / JCM 21571 / JM300</strain>
    </source>
</reference>
<comment type="function">
    <text evidence="1">Required for the first step of histidine biosynthesis. May allow the feedback regulation of ATP phosphoribosyltransferase activity by histidine.</text>
</comment>
<comment type="pathway">
    <text evidence="1">Amino-acid biosynthesis; L-histidine biosynthesis; L-histidine from 5-phospho-alpha-D-ribose 1-diphosphate: step 1/9.</text>
</comment>
<comment type="subunit">
    <text evidence="1">Heteromultimer composed of HisG and HisZ subunits.</text>
</comment>
<comment type="subcellular location">
    <subcellularLocation>
        <location evidence="1">Cytoplasm</location>
    </subcellularLocation>
</comment>
<comment type="miscellaneous">
    <text>This function is generally fulfilled by the C-terminal part of HisG, which is missing in some bacteria such as this one.</text>
</comment>
<comment type="similarity">
    <text evidence="1">Belongs to the class-II aminoacyl-tRNA synthetase family. HisZ subfamily.</text>
</comment>
<gene>
    <name evidence="1" type="primary">hisZ</name>
    <name type="synonym">hisX</name>
</gene>
<organism>
    <name type="scientific">Stutzerimonas stutzeri</name>
    <name type="common">Pseudomonas stutzeri</name>
    <dbReference type="NCBI Taxonomy" id="316"/>
    <lineage>
        <taxon>Bacteria</taxon>
        <taxon>Pseudomonadati</taxon>
        <taxon>Pseudomonadota</taxon>
        <taxon>Gammaproteobacteria</taxon>
        <taxon>Pseudomonadales</taxon>
        <taxon>Pseudomonadaceae</taxon>
        <taxon>Stutzerimonas</taxon>
    </lineage>
</organism>
<sequence>MATVDRWLLPDGIEEVLPPEAARIETARRRVLDLFQRWGYELVITPHVEFLESLLSGSGQDLDLKTFKVIDPLSGRQMGLRADITPQVARVDAHTLRREGPSRLCYAGSVLHAKPRALATSRSPIQLGAELYGDSSTSSDIEVISLMLEMLELAMVPDVHMDLGHVGIYRGLARAAGLSGEAEQRLFDAMQRKAMDEIAELTATVEPSLAAMLQALARLCGGRETLDAARRVLAEAPAPVTEALEALIRIADQLALRYPDLPLYFDLGELRGYHYHTGVVFAVFVPGVGQSIAQGGRYDDIGADFGRARPATGFSTDLKTLVSLGKAELDSRLSGIWAPYGDDTALWQQISRLRREGERVVQALDGQNGETAATAGCDRQLILQDETWTVAPLAS</sequence>
<name>HISZ_STUST</name>
<protein>
    <recommendedName>
        <fullName evidence="1">ATP phosphoribosyltransferase regulatory subunit</fullName>
    </recommendedName>
</protein>
<evidence type="ECO:0000255" key="1">
    <source>
        <dbReference type="HAMAP-Rule" id="MF_00125"/>
    </source>
</evidence>
<feature type="chain" id="PRO_0000171055" description="ATP phosphoribosyltransferase regulatory subunit">
    <location>
        <begin position="1"/>
        <end position="395"/>
    </location>
</feature>